<keyword id="KW-0002">3D-structure</keyword>
<keyword id="KW-0963">Cytoplasm</keyword>
<keyword id="KW-0378">Hydrolase</keyword>
<keyword id="KW-0520">NAD</keyword>
<keyword id="KW-0554">One-carbon metabolism</keyword>
<comment type="function">
    <text evidence="1 5">May play a key role in the regulation of the intracellular concentration of adenosylhomocysteine, which is a strong inhibitor of SAM-dependent methyltransferases. Catalyzes the hydrolysis of S-adenosyl-L-homocysteine into L-homocysteine and adenosine.</text>
</comment>
<comment type="catalytic activity">
    <reaction evidence="1">
        <text>S-adenosyl-L-homocysteine + H2O = L-homocysteine + adenosine</text>
        <dbReference type="Rhea" id="RHEA:21708"/>
        <dbReference type="ChEBI" id="CHEBI:15377"/>
        <dbReference type="ChEBI" id="CHEBI:16335"/>
        <dbReference type="ChEBI" id="CHEBI:57856"/>
        <dbReference type="ChEBI" id="CHEBI:58199"/>
        <dbReference type="EC" id="3.13.2.1"/>
    </reaction>
</comment>
<comment type="cofactor">
    <cofactor evidence="1 2">
        <name>NAD(+)</name>
        <dbReference type="ChEBI" id="CHEBI:57540"/>
    </cofactor>
    <text evidence="1 2">Binds 1 NAD(+) per subunit.</text>
</comment>
<comment type="pathway">
    <text evidence="1">Amino-acid biosynthesis; L-homocysteine biosynthesis; L-homocysteine from S-adenosyl-L-homocysteine: step 1/1.</text>
</comment>
<comment type="subunit">
    <text evidence="2">Homotetramer; dimer of dimers.</text>
</comment>
<comment type="subcellular location">
    <subcellularLocation>
        <location evidence="1">Cytoplasm</location>
    </subcellularLocation>
</comment>
<comment type="domain">
    <text evidence="2">Each protomer consists of two large domains, the substrate-binding domain and the cofactor-binding domain, which are separated by a deep crevice forming the substrate-access channel to the active site, and a small C-terminal oligomerization domain.</text>
</comment>
<comment type="similarity">
    <text evidence="1">Belongs to the adenosylhomocysteinase family.</text>
</comment>
<feature type="chain" id="PRO_0000438794" description="Adenosylhomocysteinase">
    <location>
        <begin position="1"/>
        <end position="473"/>
    </location>
</feature>
<feature type="binding site" evidence="5">
    <location>
        <begin position="58"/>
        <end position="62"/>
    </location>
    <ligand>
        <name>substrate</name>
    </ligand>
</feature>
<feature type="binding site" evidence="1 5">
    <location>
        <position position="135"/>
    </location>
    <ligand>
        <name>substrate</name>
    </ligand>
</feature>
<feature type="binding site" evidence="1 5">
    <location>
        <position position="197"/>
    </location>
    <ligand>
        <name>substrate</name>
    </ligand>
</feature>
<feature type="binding site" description="in other chain" evidence="1 2">
    <location>
        <begin position="198"/>
        <end position="200"/>
    </location>
    <ligand>
        <name>NAD(+)</name>
        <dbReference type="ChEBI" id="CHEBI:57540"/>
        <note>ligand shared between dimeric partners</note>
    </ligand>
</feature>
<feature type="binding site" evidence="1 5">
    <location>
        <position position="227"/>
    </location>
    <ligand>
        <name>substrate</name>
    </ligand>
</feature>
<feature type="binding site" evidence="1 5">
    <location>
        <position position="231"/>
    </location>
    <ligand>
        <name>substrate</name>
    </ligand>
</feature>
<feature type="binding site" description="in other chain" evidence="1 2">
    <location>
        <position position="232"/>
    </location>
    <ligand>
        <name>NAD(+)</name>
        <dbReference type="ChEBI" id="CHEBI:57540"/>
        <note>ligand shared between dimeric partners</note>
    </ligand>
</feature>
<feature type="binding site" description="in other chain" evidence="2">
    <location>
        <position position="265"/>
    </location>
    <ligand>
        <name>NAD(+)</name>
        <dbReference type="ChEBI" id="CHEBI:57540"/>
        <note>ligand shared between dimeric partners</note>
    </ligand>
</feature>
<feature type="binding site" description="in other chain" evidence="1 2">
    <location>
        <position position="284"/>
    </location>
    <ligand>
        <name>NAD(+)</name>
        <dbReference type="ChEBI" id="CHEBI:57540"/>
        <note>ligand shared between dimeric partners</note>
    </ligand>
</feature>
<feature type="binding site" description="in other chain" evidence="1">
    <location>
        <position position="319"/>
    </location>
    <ligand>
        <name>NAD(+)</name>
        <dbReference type="ChEBI" id="CHEBI:57540"/>
        <note>ligand shared between dimeric partners</note>
    </ligand>
</feature>
<feature type="binding site" description="in other chain" evidence="1 2">
    <location>
        <begin position="340"/>
        <end position="342"/>
    </location>
    <ligand>
        <name>NAD(+)</name>
        <dbReference type="ChEBI" id="CHEBI:57540"/>
        <note>ligand shared between dimeric partners</note>
    </ligand>
</feature>
<feature type="binding site" evidence="5">
    <location>
        <position position="342"/>
    </location>
    <ligand>
        <name>substrate</name>
    </ligand>
</feature>
<feature type="binding site" description="in other chain" evidence="1 2">
    <location>
        <position position="385"/>
    </location>
    <ligand>
        <name>NAD(+)</name>
        <dbReference type="ChEBI" id="CHEBI:57540"/>
        <note>ligand shared between dimeric partners</note>
    </ligand>
</feature>
<feature type="binding site" evidence="5">
    <location>
        <position position="392"/>
    </location>
    <ligand>
        <name>substrate</name>
    </ligand>
</feature>
<feature type="binding site" evidence="2">
    <location>
        <position position="467"/>
    </location>
    <ligand>
        <name>NAD(+)</name>
        <dbReference type="ChEBI" id="CHEBI:57540"/>
        <note>ligand shared between dimeric partners</note>
    </ligand>
</feature>
<feature type="binding site" evidence="2">
    <location>
        <position position="471"/>
    </location>
    <ligand>
        <name>NAD(+)</name>
        <dbReference type="ChEBI" id="CHEBI:57540"/>
        <note>ligand shared between dimeric partners</note>
    </ligand>
</feature>
<feature type="strand" evidence="7">
    <location>
        <begin position="11"/>
        <end position="13"/>
    </location>
</feature>
<feature type="helix" evidence="8">
    <location>
        <begin position="15"/>
        <end position="17"/>
    </location>
</feature>
<feature type="helix" evidence="8">
    <location>
        <begin position="18"/>
        <end position="30"/>
    </location>
</feature>
<feature type="helix" evidence="8">
    <location>
        <begin position="33"/>
        <end position="42"/>
    </location>
</feature>
<feature type="turn" evidence="8">
    <location>
        <begin position="43"/>
        <end position="45"/>
    </location>
</feature>
<feature type="turn" evidence="8">
    <location>
        <begin position="47"/>
        <end position="50"/>
    </location>
</feature>
<feature type="strand" evidence="8">
    <location>
        <begin position="52"/>
        <end position="57"/>
    </location>
</feature>
<feature type="helix" evidence="8">
    <location>
        <begin position="61"/>
        <end position="72"/>
    </location>
</feature>
<feature type="strand" evidence="8">
    <location>
        <begin position="76"/>
        <end position="80"/>
    </location>
</feature>
<feature type="turn" evidence="6">
    <location>
        <begin position="84"/>
        <end position="86"/>
    </location>
</feature>
<feature type="helix" evidence="8">
    <location>
        <begin position="89"/>
        <end position="97"/>
    </location>
</feature>
<feature type="strand" evidence="7">
    <location>
        <begin position="102"/>
        <end position="104"/>
    </location>
</feature>
<feature type="helix" evidence="8">
    <location>
        <begin position="110"/>
        <end position="119"/>
    </location>
</feature>
<feature type="strand" evidence="8">
    <location>
        <begin position="130"/>
        <end position="137"/>
    </location>
</feature>
<feature type="helix" evidence="8">
    <location>
        <begin position="138"/>
        <end position="150"/>
    </location>
</feature>
<feature type="helix" evidence="8">
    <location>
        <begin position="155"/>
        <end position="158"/>
    </location>
</feature>
<feature type="helix" evidence="8">
    <location>
        <begin position="163"/>
        <end position="178"/>
    </location>
</feature>
<feature type="helix" evidence="8">
    <location>
        <begin position="183"/>
        <end position="190"/>
    </location>
</feature>
<feature type="strand" evidence="8">
    <location>
        <begin position="194"/>
        <end position="196"/>
    </location>
</feature>
<feature type="helix" evidence="8">
    <location>
        <begin position="199"/>
        <end position="210"/>
    </location>
</feature>
<feature type="strand" evidence="8">
    <location>
        <begin position="218"/>
        <end position="220"/>
    </location>
</feature>
<feature type="helix" evidence="8">
    <location>
        <begin position="225"/>
        <end position="228"/>
    </location>
</feature>
<feature type="helix" evidence="8">
    <location>
        <begin position="231"/>
        <end position="248"/>
    </location>
</feature>
<feature type="strand" evidence="8">
    <location>
        <begin position="256"/>
        <end position="260"/>
    </location>
</feature>
<feature type="helix" evidence="8">
    <location>
        <begin position="264"/>
        <end position="276"/>
    </location>
</feature>
<feature type="strand" evidence="8">
    <location>
        <begin position="279"/>
        <end position="283"/>
    </location>
</feature>
<feature type="helix" evidence="8">
    <location>
        <begin position="287"/>
        <end position="295"/>
    </location>
</feature>
<feature type="helix" evidence="8">
    <location>
        <begin position="303"/>
        <end position="306"/>
    </location>
</feature>
<feature type="turn" evidence="8">
    <location>
        <begin position="307"/>
        <end position="309"/>
    </location>
</feature>
<feature type="strand" evidence="8">
    <location>
        <begin position="311"/>
        <end position="315"/>
    </location>
</feature>
<feature type="strand" evidence="8">
    <location>
        <begin position="317"/>
        <end position="320"/>
    </location>
</feature>
<feature type="helix" evidence="8">
    <location>
        <begin position="325"/>
        <end position="330"/>
    </location>
</feature>
<feature type="strand" evidence="8">
    <location>
        <begin position="335"/>
        <end position="339"/>
    </location>
</feature>
<feature type="strand" evidence="8">
    <location>
        <begin position="341"/>
        <end position="343"/>
    </location>
</feature>
<feature type="helix" evidence="8">
    <location>
        <begin position="344"/>
        <end position="346"/>
    </location>
</feature>
<feature type="helix" evidence="8">
    <location>
        <begin position="350"/>
        <end position="352"/>
    </location>
</feature>
<feature type="strand" evidence="8">
    <location>
        <begin position="355"/>
        <end position="361"/>
    </location>
</feature>
<feature type="strand" evidence="8">
    <location>
        <begin position="364"/>
        <end position="368"/>
    </location>
</feature>
<feature type="strand" evidence="8">
    <location>
        <begin position="374"/>
        <end position="378"/>
    </location>
</feature>
<feature type="helix" evidence="8">
    <location>
        <begin position="379"/>
        <end position="381"/>
    </location>
</feature>
<feature type="helix" evidence="8">
    <location>
        <begin position="384"/>
        <end position="388"/>
    </location>
</feature>
<feature type="helix" evidence="8">
    <location>
        <begin position="394"/>
        <end position="413"/>
    </location>
</feature>
<feature type="strand" evidence="8">
    <location>
        <begin position="422"/>
        <end position="425"/>
    </location>
</feature>
<feature type="helix" evidence="8">
    <location>
        <begin position="429"/>
        <end position="438"/>
    </location>
</feature>
<feature type="turn" evidence="8">
    <location>
        <begin position="439"/>
        <end position="444"/>
    </location>
</feature>
<feature type="helix" evidence="8">
    <location>
        <begin position="452"/>
        <end position="458"/>
    </location>
</feature>
<gene>
    <name evidence="1" type="primary">ahcY</name>
</gene>
<proteinExistence type="evidence at protein level"/>
<sequence>MNAKPGFTDYIVKDIALADFGRKEISLAETEMPGLMATREEYGPKQPLKGARIAGSLHMTIQTAVLIETLAALGADIRWVSCNIYSTQDHAAAAIAAAGIPVFAVKGETLTEYWDYTAKLFDWHGGGTPNMILDDGGDATMLVHAGYRAEQGDTAFLDKPGSEEEEIFYALVKRLLKEKPKGWFAEIAKNIKGVSEETTTGVHRLYEMANKGTLLFPAINVNDSVTKSKFDNLYGCRESLVDGIRRGTDVMLSGKVAMVAGFGDVGKGSAASLRQAGCRVMVSEVDPICALQAAMEGYEVVTMEDAAPRADIFVTATGNKDIITIEHMRAMKDRAIVCNIGHFDNEIQIASLRNLKWTNIKPQVDEIEFPDKHRIIMLSEGRLVNLGNAMGHPSFVMSASFTNQTLAQIELFANNKDSKYAKKVYVLPKTLDEKVARLHLAKIGVKLTELRKDQADYIGVKQEGPYKSDHYRY</sequence>
<accession>A0A087WNH6</accession>
<evidence type="ECO:0000255" key="1">
    <source>
        <dbReference type="HAMAP-Rule" id="MF_00563"/>
    </source>
</evidence>
<evidence type="ECO:0000269" key="2">
    <source>
    </source>
</evidence>
<evidence type="ECO:0000303" key="3">
    <source>
    </source>
</evidence>
<evidence type="ECO:0000305" key="4"/>
<evidence type="ECO:0000305" key="5">
    <source>
    </source>
</evidence>
<evidence type="ECO:0007829" key="6">
    <source>
        <dbReference type="PDB" id="4LVC"/>
    </source>
</evidence>
<evidence type="ECO:0007829" key="7">
    <source>
        <dbReference type="PDB" id="5M65"/>
    </source>
</evidence>
<evidence type="ECO:0007829" key="8">
    <source>
        <dbReference type="PDB" id="5M67"/>
    </source>
</evidence>
<dbReference type="EC" id="3.13.2.1" evidence="1"/>
<dbReference type="PDB" id="4LVC">
    <property type="method" value="X-ray"/>
    <property type="resolution" value="1.74 A"/>
    <property type="chains" value="A/B/C/D=1-473"/>
</dbReference>
<dbReference type="PDB" id="5M5K">
    <property type="method" value="X-ray"/>
    <property type="resolution" value="1.84 A"/>
    <property type="chains" value="A/B/C/D=1-473"/>
</dbReference>
<dbReference type="PDB" id="5M65">
    <property type="method" value="X-ray"/>
    <property type="resolution" value="1.95 A"/>
    <property type="chains" value="A/B=1-473"/>
</dbReference>
<dbReference type="PDB" id="5M66">
    <property type="method" value="X-ray"/>
    <property type="resolution" value="1.95 A"/>
    <property type="chains" value="A/B/C/D=1-473"/>
</dbReference>
<dbReference type="PDB" id="5M67">
    <property type="method" value="X-ray"/>
    <property type="resolution" value="1.54 A"/>
    <property type="chains" value="A/B/C/D=1-473"/>
</dbReference>
<dbReference type="PDB" id="6EXI">
    <property type="method" value="X-ray"/>
    <property type="resolution" value="1.92 A"/>
    <property type="chains" value="A/B/C/D=1-473"/>
</dbReference>
<dbReference type="PDBsum" id="4LVC"/>
<dbReference type="PDBsum" id="5M5K"/>
<dbReference type="PDBsum" id="5M65"/>
<dbReference type="PDBsum" id="5M66"/>
<dbReference type="PDBsum" id="5M67"/>
<dbReference type="PDBsum" id="6EXI"/>
<dbReference type="SMR" id="A0A087WNH6"/>
<dbReference type="STRING" id="29448.QU41_18170"/>
<dbReference type="eggNOG" id="COG0499">
    <property type="taxonomic scope" value="Bacteria"/>
</dbReference>
<dbReference type="BRENDA" id="3.3.1.1">
    <property type="organism ID" value="9755"/>
</dbReference>
<dbReference type="UniPathway" id="UPA00314">
    <property type="reaction ID" value="UER00076"/>
</dbReference>
<dbReference type="EvolutionaryTrace" id="A0A087WNH6"/>
<dbReference type="GO" id="GO:0005829">
    <property type="term" value="C:cytosol"/>
    <property type="evidence" value="ECO:0007669"/>
    <property type="project" value="TreeGrafter"/>
</dbReference>
<dbReference type="GO" id="GO:0004013">
    <property type="term" value="F:adenosylhomocysteinase activity"/>
    <property type="evidence" value="ECO:0007669"/>
    <property type="project" value="UniProtKB-UniRule"/>
</dbReference>
<dbReference type="GO" id="GO:0071269">
    <property type="term" value="P:L-homocysteine biosynthetic process"/>
    <property type="evidence" value="ECO:0007669"/>
    <property type="project" value="UniProtKB-UniRule"/>
</dbReference>
<dbReference type="GO" id="GO:0006730">
    <property type="term" value="P:one-carbon metabolic process"/>
    <property type="evidence" value="ECO:0007669"/>
    <property type="project" value="UniProtKB-KW"/>
</dbReference>
<dbReference type="GO" id="GO:0033353">
    <property type="term" value="P:S-adenosylmethionine cycle"/>
    <property type="evidence" value="ECO:0007669"/>
    <property type="project" value="TreeGrafter"/>
</dbReference>
<dbReference type="CDD" id="cd00401">
    <property type="entry name" value="SAHH"/>
    <property type="match status" value="1"/>
</dbReference>
<dbReference type="FunFam" id="3.40.50.720:FF:000004">
    <property type="entry name" value="Adenosylhomocysteinase"/>
    <property type="match status" value="1"/>
</dbReference>
<dbReference type="Gene3D" id="3.40.50.1480">
    <property type="entry name" value="Adenosylhomocysteinase-like"/>
    <property type="match status" value="1"/>
</dbReference>
<dbReference type="Gene3D" id="3.40.50.720">
    <property type="entry name" value="NAD(P)-binding Rossmann-like Domain"/>
    <property type="match status" value="1"/>
</dbReference>
<dbReference type="HAMAP" id="MF_00563">
    <property type="entry name" value="AdoHcyase"/>
    <property type="match status" value="1"/>
</dbReference>
<dbReference type="InterPro" id="IPR042172">
    <property type="entry name" value="Adenosylhomocyst_ase-like_sf"/>
</dbReference>
<dbReference type="InterPro" id="IPR000043">
    <property type="entry name" value="Adenosylhomocysteinase-like"/>
</dbReference>
<dbReference type="InterPro" id="IPR015878">
    <property type="entry name" value="Ado_hCys_hydrolase_NAD-bd"/>
</dbReference>
<dbReference type="InterPro" id="IPR036291">
    <property type="entry name" value="NAD(P)-bd_dom_sf"/>
</dbReference>
<dbReference type="InterPro" id="IPR020082">
    <property type="entry name" value="S-Ado-L-homoCys_hydrolase_CS"/>
</dbReference>
<dbReference type="NCBIfam" id="TIGR00936">
    <property type="entry name" value="ahcY"/>
    <property type="match status" value="1"/>
</dbReference>
<dbReference type="NCBIfam" id="NF004005">
    <property type="entry name" value="PRK05476.2-3"/>
    <property type="match status" value="1"/>
</dbReference>
<dbReference type="PANTHER" id="PTHR23420">
    <property type="entry name" value="ADENOSYLHOMOCYSTEINASE"/>
    <property type="match status" value="1"/>
</dbReference>
<dbReference type="PANTHER" id="PTHR23420:SF0">
    <property type="entry name" value="ADENOSYLHOMOCYSTEINASE"/>
    <property type="match status" value="1"/>
</dbReference>
<dbReference type="Pfam" id="PF05221">
    <property type="entry name" value="AdoHcyase"/>
    <property type="match status" value="1"/>
</dbReference>
<dbReference type="Pfam" id="PF00670">
    <property type="entry name" value="AdoHcyase_NAD"/>
    <property type="match status" value="1"/>
</dbReference>
<dbReference type="PIRSF" id="PIRSF001109">
    <property type="entry name" value="Ad_hcy_hydrolase"/>
    <property type="match status" value="1"/>
</dbReference>
<dbReference type="SMART" id="SM00996">
    <property type="entry name" value="AdoHcyase"/>
    <property type="match status" value="1"/>
</dbReference>
<dbReference type="SMART" id="SM00997">
    <property type="entry name" value="AdoHcyase_NAD"/>
    <property type="match status" value="1"/>
</dbReference>
<dbReference type="SUPFAM" id="SSF52283">
    <property type="entry name" value="Formate/glycerate dehydrogenase catalytic domain-like"/>
    <property type="match status" value="1"/>
</dbReference>
<dbReference type="SUPFAM" id="SSF51735">
    <property type="entry name" value="NAD(P)-binding Rossmann-fold domains"/>
    <property type="match status" value="1"/>
</dbReference>
<dbReference type="PROSITE" id="PS00738">
    <property type="entry name" value="ADOHCYASE_1"/>
    <property type="match status" value="1"/>
</dbReference>
<dbReference type="PROSITE" id="PS00739">
    <property type="entry name" value="ADOHCYASE_2"/>
    <property type="match status" value="1"/>
</dbReference>
<reference key="1">
    <citation type="journal article" date="2015" name="Acta Crystallogr. D">
        <title>An enzyme captured in two conformational states: crystal structure of S-adenosyl-L-homocysteine hydrolase from Bradyrhizobium elkanii.</title>
        <authorList>
            <person name="Manszewski T."/>
            <person name="Singh K."/>
            <person name="Imiolczyk B."/>
            <person name="Jaskolski M."/>
        </authorList>
    </citation>
    <scope>X-RAY CRYSTALLOGRAPHY (1.74 ANGSTROMS) IN COMPLEX WITH ADENOSINE AND NAD</scope>
    <scope>FUNCTION</scope>
    <scope>COFACTOR</scope>
    <scope>SUBUNIT</scope>
    <scope>DOMAIN</scope>
    <source>
        <strain evidence="4">USDA 76</strain>
    </source>
</reference>
<organism>
    <name type="scientific">Bradyrhizobium elkanii</name>
    <dbReference type="NCBI Taxonomy" id="29448"/>
    <lineage>
        <taxon>Bacteria</taxon>
        <taxon>Pseudomonadati</taxon>
        <taxon>Pseudomonadota</taxon>
        <taxon>Alphaproteobacteria</taxon>
        <taxon>Hyphomicrobiales</taxon>
        <taxon>Nitrobacteraceae</taxon>
        <taxon>Bradyrhizobium</taxon>
    </lineage>
</organism>
<protein>
    <recommendedName>
        <fullName evidence="1">Adenosylhomocysteinase</fullName>
        <ecNumber evidence="1">3.13.2.1</ecNumber>
    </recommendedName>
    <alternativeName>
        <fullName evidence="3">BeSAHase</fullName>
    </alternativeName>
    <alternativeName>
        <fullName evidence="1 3">S-adenosyl-L-homocysteine hydrolase</fullName>
        <shortName evidence="3">SAHase</shortName>
    </alternativeName>
</protein>
<name>SAHH_BRAEL</name>